<evidence type="ECO:0000250" key="1">
    <source>
        <dbReference type="UniProtKB" id="Q9C6B8"/>
    </source>
</evidence>
<evidence type="ECO:0000250" key="2">
    <source>
        <dbReference type="UniProtKB" id="Q9LFP6"/>
    </source>
</evidence>
<evidence type="ECO:0000255" key="3"/>
<evidence type="ECO:0000256" key="4">
    <source>
        <dbReference type="SAM" id="MobiDB-lite"/>
    </source>
</evidence>
<evidence type="ECO:0000269" key="5">
    <source>
    </source>
</evidence>
<evidence type="ECO:0000303" key="6">
    <source>
    </source>
</evidence>
<evidence type="ECO:0000303" key="7">
    <source>
    </source>
</evidence>
<evidence type="ECO:0000305" key="8"/>
<evidence type="ECO:0000312" key="9">
    <source>
        <dbReference type="EMBL" id="AAT39149.1"/>
    </source>
</evidence>
<evidence type="ECO:0000312" key="10">
    <source>
        <dbReference type="EMBL" id="BAS95485.1"/>
    </source>
</evidence>
<feature type="chain" id="PRO_0000123793" description="Probable auxin efflux carrier component 3b">
    <location>
        <begin position="1"/>
        <end position="591"/>
    </location>
</feature>
<feature type="topological domain" description="Extracellular" evidence="8">
    <location>
        <begin position="1"/>
        <end position="6"/>
    </location>
</feature>
<feature type="transmembrane region" description="Helical; Name=1" evidence="3">
    <location>
        <begin position="7"/>
        <end position="27"/>
    </location>
</feature>
<feature type="topological domain" description="Cytoplasmic" evidence="8">
    <location>
        <begin position="28"/>
        <end position="38"/>
    </location>
</feature>
<feature type="transmembrane region" description="Helical; Name=2" evidence="3">
    <location>
        <begin position="39"/>
        <end position="59"/>
    </location>
</feature>
<feature type="topological domain" description="Extracellular" evidence="8">
    <location>
        <begin position="60"/>
        <end position="70"/>
    </location>
</feature>
<feature type="transmembrane region" description="Helical; Name=3" evidence="3">
    <location>
        <begin position="71"/>
        <end position="93"/>
    </location>
</feature>
<feature type="topological domain" description="Cytoplasmic" evidence="8">
    <location>
        <begin position="94"/>
        <end position="107"/>
    </location>
</feature>
<feature type="transmembrane region" description="Helical; Name=4" evidence="3">
    <location>
        <begin position="108"/>
        <end position="128"/>
    </location>
</feature>
<feature type="topological domain" description="Extracellular" evidence="8">
    <location>
        <begin position="129"/>
        <end position="137"/>
    </location>
</feature>
<feature type="transmembrane region" description="Helical; Name=5" evidence="3">
    <location>
        <begin position="138"/>
        <end position="158"/>
    </location>
</feature>
<feature type="topological domain" description="Cytoplasmic" evidence="8">
    <location>
        <begin position="159"/>
        <end position="450"/>
    </location>
</feature>
<feature type="transmembrane region" description="Helical; Name=6" evidence="3">
    <location>
        <begin position="451"/>
        <end position="471"/>
    </location>
</feature>
<feature type="topological domain" description="Extracellular" evidence="8">
    <location>
        <begin position="472"/>
        <end position="474"/>
    </location>
</feature>
<feature type="transmembrane region" description="Helical; Name=7" evidence="3">
    <location>
        <begin position="475"/>
        <end position="495"/>
    </location>
</feature>
<feature type="topological domain" description="Cytoplasmic" evidence="8">
    <location>
        <begin position="496"/>
        <end position="511"/>
    </location>
</feature>
<feature type="transmembrane region" description="Helical; Name=8" evidence="3">
    <location>
        <begin position="512"/>
        <end position="532"/>
    </location>
</feature>
<feature type="topological domain" description="Extracellular" evidence="8">
    <location>
        <begin position="533"/>
        <end position="535"/>
    </location>
</feature>
<feature type="transmembrane region" description="Helical; Name=9" evidence="3">
    <location>
        <begin position="536"/>
        <end position="556"/>
    </location>
</feature>
<feature type="topological domain" description="Cytoplasmic" evidence="8">
    <location>
        <begin position="557"/>
        <end position="568"/>
    </location>
</feature>
<feature type="transmembrane region" description="Helical; Name=10" evidence="3">
    <location>
        <begin position="569"/>
        <end position="589"/>
    </location>
</feature>
<feature type="topological domain" description="Extracellular" evidence="8">
    <location>
        <begin position="590"/>
        <end position="591"/>
    </location>
</feature>
<feature type="region of interest" description="Disordered" evidence="4">
    <location>
        <begin position="243"/>
        <end position="269"/>
    </location>
</feature>
<feature type="region of interest" description="Disordered" evidence="4">
    <location>
        <begin position="283"/>
        <end position="313"/>
    </location>
</feature>
<feature type="region of interest" description="Disordered" evidence="4">
    <location>
        <begin position="344"/>
        <end position="374"/>
    </location>
</feature>
<feature type="region of interest" description="Disordered" evidence="4">
    <location>
        <begin position="392"/>
        <end position="420"/>
    </location>
</feature>
<feature type="compositionally biased region" description="Polar residues" evidence="4">
    <location>
        <begin position="243"/>
        <end position="254"/>
    </location>
</feature>
<feature type="compositionally biased region" description="Polar residues" evidence="4">
    <location>
        <begin position="283"/>
        <end position="292"/>
    </location>
</feature>
<feature type="compositionally biased region" description="Low complexity" evidence="4">
    <location>
        <begin position="395"/>
        <end position="407"/>
    </location>
</feature>
<feature type="binding site" evidence="2">
    <location>
        <position position="51"/>
    </location>
    <ligand>
        <name>(indol-3-yl)acetate</name>
        <dbReference type="ChEBI" id="CHEBI:30854"/>
    </ligand>
</feature>
<feature type="binding site" evidence="2">
    <location>
        <position position="118"/>
    </location>
    <ligand>
        <name>(indol-3-yl)acetate</name>
        <dbReference type="ChEBI" id="CHEBI:30854"/>
    </ligand>
</feature>
<feature type="binding site" evidence="2">
    <location>
        <position position="120"/>
    </location>
    <ligand>
        <name>(indol-3-yl)acetate</name>
        <dbReference type="ChEBI" id="CHEBI:30854"/>
    </ligand>
</feature>
<feature type="binding site" evidence="2">
    <location>
        <position position="151"/>
    </location>
    <ligand>
        <name>(indol-3-yl)acetate</name>
        <dbReference type="ChEBI" id="CHEBI:30854"/>
    </ligand>
</feature>
<feature type="binding site" evidence="2">
    <location>
        <position position="550"/>
    </location>
    <ligand>
        <name>(indol-3-yl)acetate</name>
        <dbReference type="ChEBI" id="CHEBI:30854"/>
    </ligand>
</feature>
<feature type="binding site" evidence="2">
    <location>
        <position position="551"/>
    </location>
    <ligand>
        <name>(indol-3-yl)acetate</name>
        <dbReference type="ChEBI" id="CHEBI:30854"/>
    </ligand>
</feature>
<comment type="function">
    <text evidence="8">May act as a component of the auxin efflux carrier.</text>
</comment>
<comment type="subunit">
    <text evidence="1">Homodimer.</text>
</comment>
<comment type="subcellular location">
    <subcellularLocation>
        <location evidence="3">Membrane</location>
        <topology evidence="3">Multi-pass membrane protein</topology>
    </subcellularLocation>
</comment>
<comment type="tissue specificity">
    <text evidence="5">Expressed in stem bases and leaves.</text>
</comment>
<comment type="similarity">
    <text evidence="8">Belongs to the auxin efflux carrier (TC 2.A.69.1) family.</text>
</comment>
<comment type="sequence caution" evidence="8">
    <conflict type="erroneous gene model prediction">
        <sequence resource="EMBL-CDS" id="AAT39149"/>
    </conflict>
</comment>
<comment type="sequence caution" evidence="8">
    <conflict type="erroneous gene model prediction">
        <sequence resource="EMBL-CDS" id="BAH93265"/>
    </conflict>
</comment>
<protein>
    <recommendedName>
        <fullName evidence="8">Probable auxin efflux carrier component 3b</fullName>
        <shortName evidence="6">OsPIN3b</shortName>
    </recommendedName>
    <alternativeName>
        <fullName evidence="7">OSPIN10b</fullName>
    </alternativeName>
</protein>
<sequence>MISWHELYMVLSAVVPLYVAMMVAYGSVRWWGVLTPEQCSGINRFVAVIAVPLLSFHFISSSDPYAMNLRFVAADTLQKVLVLAALAAWSRFPARFVPPAWPPLDCSITLFSVSTLPNTLVMGIPLLVSMYGPYSGDLMVQIVVLQSIVWYTLLLFLFEFRAARVLIAAQFPDTAASIAAVHVDPDVVSLEGSQAEAHAEVAPDGRLRMVVCRSSVSRRSAAAAATPRASNLTGVEIYSISSSRNATPRGSTFTLADIPGHQPPNSALRASSFGAADLFSLHSSSRQHTPRPSSFDEHAAARARASATVAPTNDLKDTHMIEWSSGASAASEVTGLPVFRSGRETRRLVPSDAPSIASSRVIRPPPGATGGERAASFNKAVGGQDELAKLEAGAKTEQQTTAVTTTTKGGGAAGAERARGQQNAPAGVMLRLILTTVWRRLIRNPNTYASLIGLTWSLIAFRFHITMPIIVAKSISILSDAGLGMAMFSLGLFMATQPKIIACGYSVAAASMGVRFFFGPAIMAAASAAVGIRGTLLRIAIVQAALPQGIVPFVFAKEYNLHATILCTLVIFGMLIALPITLVYYIILGLL</sequence>
<proteinExistence type="evidence at transcript level"/>
<accession>Q6L5F6</accession>
<accession>C7J235</accession>
<accession>D5A7J1</accession>
<gene>
    <name evidence="6" type="primary">PIN3B</name>
    <name evidence="10" type="ordered locus">Os05g0576900</name>
    <name evidence="8" type="ordered locus">LOC_Os05g50140</name>
    <name evidence="9" type="ORF">OJ1126_B10.6</name>
</gene>
<keyword id="KW-0927">Auxin signaling pathway</keyword>
<keyword id="KW-0472">Membrane</keyword>
<keyword id="KW-1185">Reference proteome</keyword>
<keyword id="KW-0812">Transmembrane</keyword>
<keyword id="KW-1133">Transmembrane helix</keyword>
<keyword id="KW-0813">Transport</keyword>
<reference key="1">
    <citation type="journal article" date="2005" name="Mol. Genet. Genomics">
        <title>A fine physical map of the rice chromosome 5.</title>
        <authorList>
            <person name="Cheng C.-H."/>
            <person name="Chung M.C."/>
            <person name="Liu S.-M."/>
            <person name="Chen S.-K."/>
            <person name="Kao F.Y."/>
            <person name="Lin S.-J."/>
            <person name="Hsiao S.-H."/>
            <person name="Tseng I.C."/>
            <person name="Hsing Y.-I.C."/>
            <person name="Wu H.-P."/>
            <person name="Chen C.-S."/>
            <person name="Shaw J.-F."/>
            <person name="Wu J."/>
            <person name="Matsumoto T."/>
            <person name="Sasaki T."/>
            <person name="Chen H.-C."/>
            <person name="Chow T.-Y."/>
        </authorList>
    </citation>
    <scope>NUCLEOTIDE SEQUENCE [LARGE SCALE GENOMIC DNA]</scope>
    <source>
        <strain>cv. Nipponbare</strain>
    </source>
</reference>
<reference key="2">
    <citation type="journal article" date="2005" name="Nature">
        <title>The map-based sequence of the rice genome.</title>
        <authorList>
            <consortium name="International rice genome sequencing project (IRGSP)"/>
        </authorList>
    </citation>
    <scope>NUCLEOTIDE SEQUENCE [LARGE SCALE GENOMIC DNA]</scope>
    <source>
        <strain>cv. Nipponbare</strain>
    </source>
</reference>
<reference key="3">
    <citation type="journal article" date="2008" name="Nucleic Acids Res.">
        <title>The rice annotation project database (RAP-DB): 2008 update.</title>
        <authorList>
            <consortium name="The rice annotation project (RAP)"/>
        </authorList>
    </citation>
    <scope>GENOME REANNOTATION</scope>
    <source>
        <strain>cv. Nipponbare</strain>
    </source>
</reference>
<reference key="4">
    <citation type="journal article" date="2013" name="Rice">
        <title>Improvement of the Oryza sativa Nipponbare reference genome using next generation sequence and optical map data.</title>
        <authorList>
            <person name="Kawahara Y."/>
            <person name="de la Bastide M."/>
            <person name="Hamilton J.P."/>
            <person name="Kanamori H."/>
            <person name="McCombie W.R."/>
            <person name="Ouyang S."/>
            <person name="Schwartz D.C."/>
            <person name="Tanaka T."/>
            <person name="Wu J."/>
            <person name="Zhou S."/>
            <person name="Childs K.L."/>
            <person name="Davidson R.M."/>
            <person name="Lin H."/>
            <person name="Quesada-Ocampo L."/>
            <person name="Vaillancourt B."/>
            <person name="Sakai H."/>
            <person name="Lee S.S."/>
            <person name="Kim J."/>
            <person name="Numa H."/>
            <person name="Itoh T."/>
            <person name="Buell C.R."/>
            <person name="Matsumoto T."/>
        </authorList>
    </citation>
    <scope>GENOME REANNOTATION</scope>
    <source>
        <strain>cv. Nipponbare</strain>
    </source>
</reference>
<reference key="5">
    <citation type="journal article" date="2010" name="Plant Sci.">
        <title>Identification and expression analysis of PIN genes in rice.</title>
        <authorList>
            <person name="Miyashita Y."/>
            <person name="Takasugi T."/>
            <person name="Ito Y."/>
        </authorList>
    </citation>
    <scope>IDENTIFICATION</scope>
</reference>
<reference key="6">
    <citation type="journal article" date="2005" name="Plant Cell Physiol.">
        <title>A PIN1 family gene, OsPIN1, involved in auxin-dependent adventitious root emergence and tillering in rice.</title>
        <authorList>
            <person name="Xu M."/>
            <person name="Zhu L."/>
            <person name="Shou H."/>
            <person name="Wu P."/>
        </authorList>
    </citation>
    <scope>NOMENCLATURE</scope>
</reference>
<reference key="7">
    <citation type="journal article" date="2009" name="Mol. Plant">
        <title>Expression of PIN genes in rice (Oryza sativa L.): tissue specificity and regulation by hormones.</title>
        <authorList>
            <person name="Wang J.R."/>
            <person name="Hu H."/>
            <person name="Wang G.H."/>
            <person name="Li J."/>
            <person name="Chen J.Y."/>
            <person name="Wu P."/>
        </authorList>
    </citation>
    <scope>TISSUE SPECIFICITY</scope>
</reference>
<organism>
    <name type="scientific">Oryza sativa subsp. japonica</name>
    <name type="common">Rice</name>
    <dbReference type="NCBI Taxonomy" id="39947"/>
    <lineage>
        <taxon>Eukaryota</taxon>
        <taxon>Viridiplantae</taxon>
        <taxon>Streptophyta</taxon>
        <taxon>Embryophyta</taxon>
        <taxon>Tracheophyta</taxon>
        <taxon>Spermatophyta</taxon>
        <taxon>Magnoliopsida</taxon>
        <taxon>Liliopsida</taxon>
        <taxon>Poales</taxon>
        <taxon>Poaceae</taxon>
        <taxon>BOP clade</taxon>
        <taxon>Oryzoideae</taxon>
        <taxon>Oryzeae</taxon>
        <taxon>Oryzinae</taxon>
        <taxon>Oryza</taxon>
        <taxon>Oryza sativa</taxon>
    </lineage>
</organism>
<dbReference type="EMBL" id="AC098571">
    <property type="protein sequence ID" value="AAT39149.1"/>
    <property type="status" value="ALT_SEQ"/>
    <property type="molecule type" value="Genomic_DNA"/>
</dbReference>
<dbReference type="EMBL" id="AP008211">
    <property type="protein sequence ID" value="BAH93265.1"/>
    <property type="status" value="ALT_SEQ"/>
    <property type="molecule type" value="Genomic_DNA"/>
</dbReference>
<dbReference type="EMBL" id="AP014961">
    <property type="protein sequence ID" value="BAS95485.1"/>
    <property type="molecule type" value="Genomic_DNA"/>
</dbReference>
<dbReference type="EMBL" id="BR000833">
    <property type="protein sequence ID" value="FAA00682.1"/>
    <property type="molecule type" value="Genomic_DNA"/>
</dbReference>
<dbReference type="SMR" id="Q6L5F6"/>
<dbReference type="FunCoup" id="Q6L5F6">
    <property type="interactions" value="7"/>
</dbReference>
<dbReference type="STRING" id="39947.Q6L5F6"/>
<dbReference type="GlyCosmos" id="Q6L5F6">
    <property type="glycosylation" value="1 site, No reported glycans"/>
</dbReference>
<dbReference type="PaxDb" id="39947-Q6L5F6"/>
<dbReference type="EnsemblPlants" id="Os05t0576900-01">
    <property type="protein sequence ID" value="Os05t0576900-01"/>
    <property type="gene ID" value="Os05g0576900"/>
</dbReference>
<dbReference type="Gramene" id="Os05t0576900-01">
    <property type="protein sequence ID" value="Os05t0576900-01"/>
    <property type="gene ID" value="Os05g0576900"/>
</dbReference>
<dbReference type="KEGG" id="dosa:Os05g0576900"/>
<dbReference type="KEGG" id="osa:9270681"/>
<dbReference type="eggNOG" id="ENOG502QRM7">
    <property type="taxonomic scope" value="Eukaryota"/>
</dbReference>
<dbReference type="InParanoid" id="Q6L5F6"/>
<dbReference type="OMA" id="YVMNLRF"/>
<dbReference type="OrthoDB" id="672477at2759"/>
<dbReference type="PlantReactome" id="R-OSA-5608118">
    <property type="pathway name" value="Auxin signalling"/>
</dbReference>
<dbReference type="PlantReactome" id="R-OSA-8858053">
    <property type="pathway name" value="Polar auxin transport"/>
</dbReference>
<dbReference type="Proteomes" id="UP000000763">
    <property type="component" value="Chromosome 5"/>
</dbReference>
<dbReference type="Proteomes" id="UP000059680">
    <property type="component" value="Chromosome 5"/>
</dbReference>
<dbReference type="GO" id="GO:0071944">
    <property type="term" value="C:cell periphery"/>
    <property type="evidence" value="ECO:0000250"/>
    <property type="project" value="UniProtKB"/>
</dbReference>
<dbReference type="GO" id="GO:0005783">
    <property type="term" value="C:endoplasmic reticulum"/>
    <property type="evidence" value="ECO:0000318"/>
    <property type="project" value="GO_Central"/>
</dbReference>
<dbReference type="GO" id="GO:0005886">
    <property type="term" value="C:plasma membrane"/>
    <property type="evidence" value="ECO:0000250"/>
    <property type="project" value="UniProtKB"/>
</dbReference>
<dbReference type="GO" id="GO:0010329">
    <property type="term" value="F:auxin efflux transmembrane transporter activity"/>
    <property type="evidence" value="ECO:0000250"/>
    <property type="project" value="UniProtKB"/>
</dbReference>
<dbReference type="GO" id="GO:0042802">
    <property type="term" value="F:identical protein binding"/>
    <property type="evidence" value="ECO:0000250"/>
    <property type="project" value="UniProtKB"/>
</dbReference>
<dbReference type="GO" id="GO:0042803">
    <property type="term" value="F:protein homodimerization activity"/>
    <property type="evidence" value="ECO:0000250"/>
    <property type="project" value="UniProtKB"/>
</dbReference>
<dbReference type="GO" id="GO:0010315">
    <property type="term" value="P:auxin export across the plasma membrane"/>
    <property type="evidence" value="ECO:0000250"/>
    <property type="project" value="UniProtKB"/>
</dbReference>
<dbReference type="GO" id="GO:0009926">
    <property type="term" value="P:auxin polar transport"/>
    <property type="evidence" value="ECO:0000318"/>
    <property type="project" value="GO_Central"/>
</dbReference>
<dbReference type="GO" id="GO:0009734">
    <property type="term" value="P:auxin-activated signaling pathway"/>
    <property type="evidence" value="ECO:0007669"/>
    <property type="project" value="UniProtKB-KW"/>
</dbReference>
<dbReference type="InterPro" id="IPR014024">
    <property type="entry name" value="Auxin_eff_plant"/>
</dbReference>
<dbReference type="InterPro" id="IPR051107">
    <property type="entry name" value="Auxin_Efflux_Carrier"/>
</dbReference>
<dbReference type="InterPro" id="IPR004776">
    <property type="entry name" value="Mem_transp_PIN-like"/>
</dbReference>
<dbReference type="NCBIfam" id="TIGR00946">
    <property type="entry name" value="2a69"/>
    <property type="match status" value="1"/>
</dbReference>
<dbReference type="PANTHER" id="PTHR31752">
    <property type="entry name" value="AUXIN EFFLUX CARRIER COMPONENT 1B-RELATED"/>
    <property type="match status" value="1"/>
</dbReference>
<dbReference type="PANTHER" id="PTHR31752:SF16">
    <property type="entry name" value="AUXIN EFFLUX CARRIER COMPONENT 3B-RELATED"/>
    <property type="match status" value="1"/>
</dbReference>
<dbReference type="Pfam" id="PF03547">
    <property type="entry name" value="Mem_trans"/>
    <property type="match status" value="1"/>
</dbReference>
<name>PIN3B_ORYSJ</name>